<comment type="function">
    <text evidence="1">May play a role in DNA repair. It seems to be involved in an RecBC-independent recombinational process of DNA repair. It may act with RecF and RecO.</text>
</comment>
<comment type="similarity">
    <text evidence="1">Belongs to the RecR family.</text>
</comment>
<proteinExistence type="inferred from homology"/>
<sequence length="201" mass="21320">MAAAVAGPEIERLIQLLAKLPGLGPRSARRAALHLIKKREALMAPLASALQVAIERIQVCKVCGNIDTQNPCTVCTDPRRDPSIIVVVADVADLWALERAHAASGRYHVLGATLSPLDGVGPDDLSIDALVARAHDPQVSEIVLALNATVDGQTTAHYITDLLMEAGVKVTRLAHGVPVGGELDYLDEGTLSAAMRQRTLF</sequence>
<protein>
    <recommendedName>
        <fullName evidence="1">Recombination protein RecR</fullName>
    </recommendedName>
</protein>
<keyword id="KW-0227">DNA damage</keyword>
<keyword id="KW-0233">DNA recombination</keyword>
<keyword id="KW-0234">DNA repair</keyword>
<keyword id="KW-0479">Metal-binding</keyword>
<keyword id="KW-0862">Zinc</keyword>
<keyword id="KW-0863">Zinc-finger</keyword>
<feature type="chain" id="PRO_1000057157" description="Recombination protein RecR">
    <location>
        <begin position="1"/>
        <end position="201"/>
    </location>
</feature>
<feature type="domain" description="Toprim" evidence="1">
    <location>
        <begin position="83"/>
        <end position="178"/>
    </location>
</feature>
<feature type="zinc finger region" description="C4-type" evidence="1">
    <location>
        <begin position="60"/>
        <end position="75"/>
    </location>
</feature>
<reference key="1">
    <citation type="submission" date="2006-03" db="EMBL/GenBank/DDBJ databases">
        <title>Complete sequence of Rhodopseudomonas palustris BisB18.</title>
        <authorList>
            <consortium name="US DOE Joint Genome Institute"/>
            <person name="Copeland A."/>
            <person name="Lucas S."/>
            <person name="Lapidus A."/>
            <person name="Barry K."/>
            <person name="Detter J.C."/>
            <person name="Glavina del Rio T."/>
            <person name="Hammon N."/>
            <person name="Israni S."/>
            <person name="Dalin E."/>
            <person name="Tice H."/>
            <person name="Pitluck S."/>
            <person name="Chain P."/>
            <person name="Malfatti S."/>
            <person name="Shin M."/>
            <person name="Vergez L."/>
            <person name="Schmutz J."/>
            <person name="Larimer F."/>
            <person name="Land M."/>
            <person name="Hauser L."/>
            <person name="Pelletier D.A."/>
            <person name="Kyrpides N."/>
            <person name="Anderson I."/>
            <person name="Oda Y."/>
            <person name="Harwood C.S."/>
            <person name="Richardson P."/>
        </authorList>
    </citation>
    <scope>NUCLEOTIDE SEQUENCE [LARGE SCALE GENOMIC DNA]</scope>
    <source>
        <strain>BisB18</strain>
    </source>
</reference>
<organism>
    <name type="scientific">Rhodopseudomonas palustris (strain BisB18)</name>
    <dbReference type="NCBI Taxonomy" id="316056"/>
    <lineage>
        <taxon>Bacteria</taxon>
        <taxon>Pseudomonadati</taxon>
        <taxon>Pseudomonadota</taxon>
        <taxon>Alphaproteobacteria</taxon>
        <taxon>Hyphomicrobiales</taxon>
        <taxon>Nitrobacteraceae</taxon>
        <taxon>Rhodopseudomonas</taxon>
    </lineage>
</organism>
<evidence type="ECO:0000255" key="1">
    <source>
        <dbReference type="HAMAP-Rule" id="MF_00017"/>
    </source>
</evidence>
<gene>
    <name evidence="1" type="primary">recR</name>
    <name type="ordered locus">RPC_4846</name>
</gene>
<dbReference type="EMBL" id="CP000301">
    <property type="protein sequence ID" value="ABD90368.1"/>
    <property type="molecule type" value="Genomic_DNA"/>
</dbReference>
<dbReference type="SMR" id="Q20WW8"/>
<dbReference type="STRING" id="316056.RPC_4846"/>
<dbReference type="KEGG" id="rpc:RPC_4846"/>
<dbReference type="eggNOG" id="COG0353">
    <property type="taxonomic scope" value="Bacteria"/>
</dbReference>
<dbReference type="HOGENOM" id="CLU_060739_1_1_5"/>
<dbReference type="OrthoDB" id="9802672at2"/>
<dbReference type="GO" id="GO:0003677">
    <property type="term" value="F:DNA binding"/>
    <property type="evidence" value="ECO:0007669"/>
    <property type="project" value="UniProtKB-UniRule"/>
</dbReference>
<dbReference type="GO" id="GO:0008270">
    <property type="term" value="F:zinc ion binding"/>
    <property type="evidence" value="ECO:0007669"/>
    <property type="project" value="UniProtKB-KW"/>
</dbReference>
<dbReference type="GO" id="GO:0006310">
    <property type="term" value="P:DNA recombination"/>
    <property type="evidence" value="ECO:0007669"/>
    <property type="project" value="UniProtKB-UniRule"/>
</dbReference>
<dbReference type="GO" id="GO:0006281">
    <property type="term" value="P:DNA repair"/>
    <property type="evidence" value="ECO:0007669"/>
    <property type="project" value="UniProtKB-UniRule"/>
</dbReference>
<dbReference type="CDD" id="cd01025">
    <property type="entry name" value="TOPRIM_recR"/>
    <property type="match status" value="1"/>
</dbReference>
<dbReference type="Gene3D" id="3.40.1360.10">
    <property type="match status" value="1"/>
</dbReference>
<dbReference type="Gene3D" id="6.10.250.240">
    <property type="match status" value="1"/>
</dbReference>
<dbReference type="Gene3D" id="1.10.8.420">
    <property type="entry name" value="RecR Domain 1"/>
    <property type="match status" value="1"/>
</dbReference>
<dbReference type="HAMAP" id="MF_00017">
    <property type="entry name" value="RecR"/>
    <property type="match status" value="1"/>
</dbReference>
<dbReference type="InterPro" id="IPR000093">
    <property type="entry name" value="DNA_Rcmb_RecR"/>
</dbReference>
<dbReference type="InterPro" id="IPR023627">
    <property type="entry name" value="Rcmb_RecR"/>
</dbReference>
<dbReference type="InterPro" id="IPR015967">
    <property type="entry name" value="Rcmb_RecR_Znf"/>
</dbReference>
<dbReference type="InterPro" id="IPR006171">
    <property type="entry name" value="TOPRIM_dom"/>
</dbReference>
<dbReference type="InterPro" id="IPR034137">
    <property type="entry name" value="TOPRIM_RecR"/>
</dbReference>
<dbReference type="NCBIfam" id="TIGR00615">
    <property type="entry name" value="recR"/>
    <property type="match status" value="1"/>
</dbReference>
<dbReference type="PANTHER" id="PTHR30446">
    <property type="entry name" value="RECOMBINATION PROTEIN RECR"/>
    <property type="match status" value="1"/>
</dbReference>
<dbReference type="PANTHER" id="PTHR30446:SF0">
    <property type="entry name" value="RECOMBINATION PROTEIN RECR"/>
    <property type="match status" value="1"/>
</dbReference>
<dbReference type="Pfam" id="PF21175">
    <property type="entry name" value="RecR_C"/>
    <property type="match status" value="1"/>
</dbReference>
<dbReference type="Pfam" id="PF21176">
    <property type="entry name" value="RecR_HhH"/>
    <property type="match status" value="1"/>
</dbReference>
<dbReference type="Pfam" id="PF02132">
    <property type="entry name" value="RecR_ZnF"/>
    <property type="match status" value="1"/>
</dbReference>
<dbReference type="Pfam" id="PF13662">
    <property type="entry name" value="Toprim_4"/>
    <property type="match status" value="1"/>
</dbReference>
<dbReference type="SUPFAM" id="SSF111304">
    <property type="entry name" value="Recombination protein RecR"/>
    <property type="match status" value="1"/>
</dbReference>
<dbReference type="PROSITE" id="PS01300">
    <property type="entry name" value="RECR"/>
    <property type="match status" value="1"/>
</dbReference>
<dbReference type="PROSITE" id="PS50880">
    <property type="entry name" value="TOPRIM"/>
    <property type="match status" value="1"/>
</dbReference>
<accession>Q20WW8</accession>
<name>RECR_RHOPB</name>